<dbReference type="EMBL" id="U44726">
    <property type="protein sequence ID" value="AAC36492.1"/>
    <property type="molecule type" value="Genomic_DNA"/>
</dbReference>
<dbReference type="PIR" id="JC6017">
    <property type="entry name" value="JC6017"/>
</dbReference>
<dbReference type="GO" id="GO:0005737">
    <property type="term" value="C:cytoplasm"/>
    <property type="evidence" value="ECO:0007669"/>
    <property type="project" value="UniProtKB-SubCell"/>
</dbReference>
<dbReference type="GO" id="GO:0005634">
    <property type="term" value="C:nucleus"/>
    <property type="evidence" value="ECO:0007669"/>
    <property type="project" value="UniProtKB-SubCell"/>
</dbReference>
<dbReference type="GO" id="GO:0003677">
    <property type="term" value="F:DNA binding"/>
    <property type="evidence" value="ECO:0007669"/>
    <property type="project" value="UniProtKB-KW"/>
</dbReference>
<dbReference type="GO" id="GO:0008270">
    <property type="term" value="F:zinc ion binding"/>
    <property type="evidence" value="ECO:0007669"/>
    <property type="project" value="UniProtKB-KW"/>
</dbReference>
<dbReference type="GO" id="GO:0045944">
    <property type="term" value="P:positive regulation of transcription by RNA polymerase II"/>
    <property type="evidence" value="ECO:0007669"/>
    <property type="project" value="TreeGrafter"/>
</dbReference>
<dbReference type="FunFam" id="3.30.160.60:FF:000993">
    <property type="entry name" value="pH-response transcription factor pacC/RIM101"/>
    <property type="match status" value="1"/>
</dbReference>
<dbReference type="Gene3D" id="3.30.160.60">
    <property type="entry name" value="Classic Zinc Finger"/>
    <property type="match status" value="2"/>
</dbReference>
<dbReference type="InterPro" id="IPR050806">
    <property type="entry name" value="pacC/RIM101"/>
</dbReference>
<dbReference type="InterPro" id="IPR036236">
    <property type="entry name" value="Znf_C2H2_sf"/>
</dbReference>
<dbReference type="InterPro" id="IPR013087">
    <property type="entry name" value="Znf_C2H2_type"/>
</dbReference>
<dbReference type="PANTHER" id="PTHR47257">
    <property type="entry name" value="PH-RESPONSE TRANSCRIPTION FACTOR PACC/RIM101"/>
    <property type="match status" value="1"/>
</dbReference>
<dbReference type="PANTHER" id="PTHR47257:SF1">
    <property type="entry name" value="PH-RESPONSE TRANSCRIPTION FACTOR PACC_RIM101"/>
    <property type="match status" value="1"/>
</dbReference>
<dbReference type="Pfam" id="PF00096">
    <property type="entry name" value="zf-C2H2"/>
    <property type="match status" value="1"/>
</dbReference>
<dbReference type="SMART" id="SM00355">
    <property type="entry name" value="ZnF_C2H2"/>
    <property type="match status" value="3"/>
</dbReference>
<dbReference type="SUPFAM" id="SSF57667">
    <property type="entry name" value="beta-beta-alpha zinc fingers"/>
    <property type="match status" value="1"/>
</dbReference>
<dbReference type="PROSITE" id="PS00028">
    <property type="entry name" value="ZINC_FINGER_C2H2_1"/>
    <property type="match status" value="1"/>
</dbReference>
<dbReference type="PROSITE" id="PS50157">
    <property type="entry name" value="ZINC_FINGER_C2H2_2"/>
    <property type="match status" value="2"/>
</dbReference>
<keyword id="KW-0010">Activator</keyword>
<keyword id="KW-0963">Cytoplasm</keyword>
<keyword id="KW-0238">DNA-binding</keyword>
<keyword id="KW-0479">Metal-binding</keyword>
<keyword id="KW-0539">Nucleus</keyword>
<keyword id="KW-0677">Repeat</keyword>
<keyword id="KW-0678">Repressor</keyword>
<keyword id="KW-0804">Transcription</keyword>
<keyword id="KW-0805">Transcription regulation</keyword>
<keyword id="KW-0862">Zinc</keyword>
<keyword id="KW-0863">Zinc-finger</keyword>
<comment type="function">
    <text evidence="4">Transcription factor that mediates regulation of both acid- and alkaline-expressed genes in response to ambient pH. At alkaline ambient pH, activates transcription of alkaline-expressed genes (including PACC itself) and represses transcription of acid-expressed genes. Specifically recognizes and binds the consensus sequence 5'-GCCARG-3'.</text>
</comment>
<comment type="subunit">
    <text>Binds to DNA.</text>
</comment>
<comment type="subcellular location">
    <subcellularLocation>
        <location evidence="1">Cytoplasm</location>
    </subcellularLocation>
    <subcellularLocation>
        <location evidence="1">Nucleus</location>
    </subcellularLocation>
</comment>
<comment type="induction">
    <text evidence="4">By alkaline conditions.</text>
</comment>
<comment type="PTM">
    <text evidence="1">Activated by C-terminal proteolytic cleavage by signaling protease (probably palB/RIM13) at neutral to alkaline ambient pH.</text>
</comment>
<comment type="similarity">
    <text evidence="5">Belongs to the pacC/RIM101 family.</text>
</comment>
<organism>
    <name type="scientific">Penicillium chrysogenum</name>
    <name type="common">Penicillium notatum</name>
    <dbReference type="NCBI Taxonomy" id="5076"/>
    <lineage>
        <taxon>Eukaryota</taxon>
        <taxon>Fungi</taxon>
        <taxon>Dikarya</taxon>
        <taxon>Ascomycota</taxon>
        <taxon>Pezizomycotina</taxon>
        <taxon>Eurotiomycetes</taxon>
        <taxon>Eurotiomycetidae</taxon>
        <taxon>Eurotiales</taxon>
        <taxon>Aspergillaceae</taxon>
        <taxon>Penicillium</taxon>
        <taxon>Penicillium chrysogenum species complex</taxon>
    </lineage>
</organism>
<reference key="1">
    <citation type="journal article" date="1996" name="Mol. Microbiol.">
        <title>Characterization of a Penicillium chrysogenum gene encoding a PacC transcription factor and its binding sites in the divergent pcbAB-pcbC promoter of the penicillin biosynthetic cluster.</title>
        <authorList>
            <person name="Suarez T."/>
            <person name="Penalva M.A."/>
        </authorList>
    </citation>
    <scope>NUCLEOTIDE SEQUENCE [GENOMIC DNA]</scope>
    <scope>FUNCTION</scope>
    <scope>DNA-BINDING</scope>
    <scope>INDUCTION</scope>
    <source>
        <strain>ATCC 9480 / CBS 307.48 / NRRL 1951 / GB8 / QM 941</strain>
    </source>
</reference>
<protein>
    <recommendedName>
        <fullName>pH-response transcription factor pacC/RIM101</fullName>
    </recommendedName>
</protein>
<gene>
    <name type="primary">PACC</name>
</gene>
<accession>Q01864</accession>
<proteinExistence type="evidence at protein level"/>
<feature type="chain" id="PRO_0000046840" description="pH-response transcription factor pacC/RIM101">
    <location>
        <begin position="1"/>
        <end position="643"/>
    </location>
</feature>
<feature type="zinc finger region" description="C2H2-type 1" evidence="2">
    <location>
        <begin position="58"/>
        <end position="83"/>
    </location>
</feature>
<feature type="zinc finger region" description="C2H2-type 2" evidence="2">
    <location>
        <begin position="94"/>
        <end position="118"/>
    </location>
</feature>
<feature type="zinc finger region" description="C2H2-type 3" evidence="2">
    <location>
        <begin position="124"/>
        <end position="146"/>
    </location>
</feature>
<feature type="region of interest" description="Disordered" evidence="3">
    <location>
        <begin position="139"/>
        <end position="161"/>
    </location>
</feature>
<feature type="region of interest" description="Disordered" evidence="3">
    <location>
        <begin position="354"/>
        <end position="373"/>
    </location>
</feature>
<feature type="region of interest" description="Disordered" evidence="3">
    <location>
        <begin position="384"/>
        <end position="432"/>
    </location>
</feature>
<feature type="region of interest" description="Disordered" evidence="3">
    <location>
        <begin position="452"/>
        <end position="509"/>
    </location>
</feature>
<feature type="region of interest" description="Disordered" evidence="3">
    <location>
        <begin position="602"/>
        <end position="643"/>
    </location>
</feature>
<feature type="short sequence motif" description="YPX[LI] motif 1">
    <location>
        <begin position="435"/>
        <end position="438"/>
    </location>
</feature>
<feature type="short sequence motif" description="YPX[LI] motif 2">
    <location>
        <begin position="625"/>
        <end position="628"/>
    </location>
</feature>
<feature type="compositionally biased region" description="Polar residues" evidence="3">
    <location>
        <begin position="402"/>
        <end position="423"/>
    </location>
</feature>
<feature type="compositionally biased region" description="Basic and acidic residues" evidence="3">
    <location>
        <begin position="484"/>
        <end position="509"/>
    </location>
</feature>
<feature type="compositionally biased region" description="Basic and acidic residues" evidence="3">
    <location>
        <begin position="611"/>
        <end position="620"/>
    </location>
</feature>
<evidence type="ECO:0000250" key="1"/>
<evidence type="ECO:0000255" key="2">
    <source>
        <dbReference type="PROSITE-ProRule" id="PRU00042"/>
    </source>
</evidence>
<evidence type="ECO:0000256" key="3">
    <source>
        <dbReference type="SAM" id="MobiDB-lite"/>
    </source>
</evidence>
<evidence type="ECO:0000269" key="4">
    <source>
    </source>
</evidence>
<evidence type="ECO:0000305" key="5"/>
<name>PACC_PENCH</name>
<sequence length="643" mass="68823">MTENHTPSTTQPTLPAPVAEAAPIQANPAPSASVTATAAAATAAVNNAPSMNGAGEQLPCQWVGCTEKSPTAESLYEHVCERHVGRKSTNNLNLTCQWGTCNTTTVKRDHITSHIRVHVPLKPHKCDFCGKAFKRPQDLKKHVKTHADDSEIRSPEPGMKHPDMMFPQNPRGSPAATHYFESPINGINGQYSHAPPPQYYQPHPPPQAPNPHSYGNLYYALSQGQEGGHPYDRKRGYDALNEFFGDLKRRQFDPNSYAAVGQRLLGLQALQLPFLSGPAPEYQQMPAPVAVGGGGGGYGGGAPQPPGYHLPPMSNVRTKNDLINIDQFLEQMQNTIYESDENVAAAGVAQPGAHYVHGGMNHRTTHSPPTHSRQATLLQLPSAPMAAATAHSPSVGTPALTPPSSAQSYTSNRSPISLHSSRVSPPHEEAAPGMYPRLPAAICADSMTAGYPTASGAAPPSTLSGAYDHDDRRRYTGGTLQRARPAERAATEDRMDISQDSKHDGERTPKAMHISASLIDPALSGTSSDPEQESAKRTAATATEVAERDVNVAWVEKVRLLENLRRLVSGLLEAGSLTPEYGVQTSSASPTPGLDAMEGVETASVRAASEQAREEPKSESEGVFYPTLRGVDEDEDGDSKMPE</sequence>